<keyword id="KW-0067">ATP-binding</keyword>
<keyword id="KW-0169">Cobalamin biosynthesis</keyword>
<keyword id="KW-0315">Glutamine amidotransferase</keyword>
<keyword id="KW-0436">Ligase</keyword>
<keyword id="KW-0460">Magnesium</keyword>
<keyword id="KW-0547">Nucleotide-binding</keyword>
<comment type="function">
    <text evidence="1">Catalyzes the ATP-dependent amidation of the two carboxylate groups at positions a and c of hydrogenobyrinate, using either L-glutamine or ammonia as the nitrogen source.</text>
</comment>
<comment type="catalytic activity">
    <reaction evidence="1">
        <text>hydrogenobyrinate + 2 L-glutamine + 2 ATP + 2 H2O = hydrogenobyrinate a,c-diamide + 2 L-glutamate + 2 ADP + 2 phosphate + 2 H(+)</text>
        <dbReference type="Rhea" id="RHEA:12544"/>
        <dbReference type="ChEBI" id="CHEBI:15377"/>
        <dbReference type="ChEBI" id="CHEBI:15378"/>
        <dbReference type="ChEBI" id="CHEBI:29985"/>
        <dbReference type="ChEBI" id="CHEBI:30616"/>
        <dbReference type="ChEBI" id="CHEBI:43474"/>
        <dbReference type="ChEBI" id="CHEBI:58359"/>
        <dbReference type="ChEBI" id="CHEBI:77873"/>
        <dbReference type="ChEBI" id="CHEBI:77874"/>
        <dbReference type="ChEBI" id="CHEBI:456216"/>
        <dbReference type="EC" id="6.3.5.9"/>
    </reaction>
</comment>
<comment type="cofactor">
    <cofactor evidence="1">
        <name>Mg(2+)</name>
        <dbReference type="ChEBI" id="CHEBI:18420"/>
    </cofactor>
</comment>
<comment type="pathway">
    <text evidence="1">Cofactor biosynthesis; adenosylcobalamin biosynthesis; cob(II)yrinate a,c-diamide from precorrin-2 (aerobic route): step 9/10.</text>
</comment>
<comment type="domain">
    <text evidence="1">Comprises of two domains. The C-terminal domain contains the binding site for glutamine and catalyzes the hydrolysis of this substrate to glutamate and ammonia. The N-terminal domain is anticipated to bind ATP and hydrogenobyrinate and catalyzes the ultimate synthesis of the diamide product. The ammonia produced via the glutaminase domain is probably translocated to the adjacent domain via a molecular tunnel, where it reacts with an activated intermediate.</text>
</comment>
<comment type="miscellaneous">
    <text evidence="1">The a and c carboxylates of hydrogenobyrinate are activated for nucleophilic attack via formation of a phosphorylated intermediate by ATP. CobB catalyzes first the amidation of the c-carboxylate, and then that of the a-carboxylate.</text>
</comment>
<comment type="similarity">
    <text evidence="1">Belongs to the CobB/CbiA family.</text>
</comment>
<protein>
    <recommendedName>
        <fullName evidence="1">Hydrogenobyrinate a,c-diamide synthase</fullName>
        <ecNumber evidence="1">6.3.5.9</ecNumber>
    </recommendedName>
    <alternativeName>
        <fullName evidence="1">Hydrogenobyrinic acid a,c-diamide synthase</fullName>
    </alternativeName>
</protein>
<evidence type="ECO:0000255" key="1">
    <source>
        <dbReference type="HAMAP-Rule" id="MF_00027"/>
    </source>
</evidence>
<gene>
    <name evidence="1" type="primary">cobB</name>
    <name type="ordered locus">Tfu_0311</name>
</gene>
<feature type="chain" id="PRO_1000002298" description="Hydrogenobyrinate a,c-diamide synthase">
    <location>
        <begin position="1"/>
        <end position="474"/>
    </location>
</feature>
<feature type="domain" description="GATase cobBQ-type" evidence="1">
    <location>
        <begin position="269"/>
        <end position="459"/>
    </location>
</feature>
<feature type="active site" description="Nucleophile" evidence="1">
    <location>
        <position position="352"/>
    </location>
</feature>
<feature type="site" description="Increases nucleophilicity of active site Cys" evidence="1">
    <location>
        <position position="451"/>
    </location>
</feature>
<name>COBB_THEFY</name>
<reference key="1">
    <citation type="journal article" date="2007" name="J. Bacteriol.">
        <title>Genome sequence and analysis of the soil cellulolytic actinomycete Thermobifida fusca YX.</title>
        <authorList>
            <person name="Lykidis A."/>
            <person name="Mavromatis K."/>
            <person name="Ivanova N."/>
            <person name="Anderson I."/>
            <person name="Land M."/>
            <person name="DiBartolo G."/>
            <person name="Martinez M."/>
            <person name="Lapidus A."/>
            <person name="Lucas S."/>
            <person name="Copeland A."/>
            <person name="Richardson P."/>
            <person name="Wilson D.B."/>
            <person name="Kyrpides N."/>
        </authorList>
    </citation>
    <scope>NUCLEOTIDE SEQUENCE [LARGE SCALE GENOMIC DNA]</scope>
    <source>
        <strain>YX</strain>
    </source>
</reference>
<organism>
    <name type="scientific">Thermobifida fusca (strain YX)</name>
    <dbReference type="NCBI Taxonomy" id="269800"/>
    <lineage>
        <taxon>Bacteria</taxon>
        <taxon>Bacillati</taxon>
        <taxon>Actinomycetota</taxon>
        <taxon>Actinomycetes</taxon>
        <taxon>Streptosporangiales</taxon>
        <taxon>Nocardiopsidaceae</taxon>
        <taxon>Thermobifida</taxon>
    </lineage>
</organism>
<accession>Q47T68</accession>
<proteinExistence type="inferred from homology"/>
<sequence>MSGDVPAAVLPRLVISAPTSGAGKTTVATGLMAALRAAGYDVSGHKAGPDYIDPGYHSLATGRPGRNLDVHLHGENLLGPLLLHGASHPRPADLAVIEGMMGLYDGKLGGRGFASTAHVAALLDAPVVLVVDVSHVSRSAAAIVAGMAVFDQRIRIAGVILNRVGSRRHAAEVASAVEDVGVPVLGALRHDSGLAVPSRHLGLVPAEERAEAVAAVELLAERIAAQVDLTAVVEVARSAPPLHAQAWSAQEALRAAGFHPVSAQRDHPVVAVAGGQAFTFRYAEVEELLRAAGCRPVVFDPMSDPALPDGTAGIYLGGGFPEVYAAELAGNTALRTALRDAVRSGVPTVAECAGLLYLCRDVDGAPMVGALDAVGRMTSRLALGYYSALAPAETLVAAEGDRVPGHTFHRTTVTSTGEQAGPAWLLDGQPDGFSSDPAGIGRPTLHASYLHTHWAGCPQAAARFAAAVSTQRPC</sequence>
<dbReference type="EC" id="6.3.5.9" evidence="1"/>
<dbReference type="EMBL" id="CP000088">
    <property type="protein sequence ID" value="AAZ54349.1"/>
    <property type="molecule type" value="Genomic_DNA"/>
</dbReference>
<dbReference type="RefSeq" id="WP_011290758.1">
    <property type="nucleotide sequence ID" value="NC_007333.1"/>
</dbReference>
<dbReference type="SMR" id="Q47T68"/>
<dbReference type="STRING" id="269800.Tfu_0311"/>
<dbReference type="KEGG" id="tfu:Tfu_0311"/>
<dbReference type="eggNOG" id="COG1797">
    <property type="taxonomic scope" value="Bacteria"/>
</dbReference>
<dbReference type="HOGENOM" id="CLU_022752_1_1_11"/>
<dbReference type="OrthoDB" id="9764035at2"/>
<dbReference type="UniPathway" id="UPA00148">
    <property type="reaction ID" value="UER00220"/>
</dbReference>
<dbReference type="GO" id="GO:0005524">
    <property type="term" value="F:ATP binding"/>
    <property type="evidence" value="ECO:0007669"/>
    <property type="project" value="UniProtKB-UniRule"/>
</dbReference>
<dbReference type="GO" id="GO:0042242">
    <property type="term" value="F:cobyrinic acid a,c-diamide synthase activity"/>
    <property type="evidence" value="ECO:0007669"/>
    <property type="project" value="InterPro"/>
</dbReference>
<dbReference type="GO" id="GO:0043802">
    <property type="term" value="F:hydrogenobyrinic acid a,c-diamide synthase (glutamine-hydrolysing) activity"/>
    <property type="evidence" value="ECO:0007669"/>
    <property type="project" value="UniProtKB-UniRule"/>
</dbReference>
<dbReference type="GO" id="GO:0009236">
    <property type="term" value="P:cobalamin biosynthetic process"/>
    <property type="evidence" value="ECO:0007669"/>
    <property type="project" value="UniProtKB-UniRule"/>
</dbReference>
<dbReference type="CDD" id="cd03130">
    <property type="entry name" value="GATase1_CobB"/>
    <property type="match status" value="1"/>
</dbReference>
<dbReference type="Gene3D" id="3.40.50.880">
    <property type="match status" value="1"/>
</dbReference>
<dbReference type="Gene3D" id="3.40.50.300">
    <property type="entry name" value="P-loop containing nucleotide triphosphate hydrolases"/>
    <property type="match status" value="1"/>
</dbReference>
<dbReference type="HAMAP" id="MF_00027">
    <property type="entry name" value="CobB_CbiA"/>
    <property type="match status" value="1"/>
</dbReference>
<dbReference type="InterPro" id="IPR004484">
    <property type="entry name" value="CbiA/CobB_synth"/>
</dbReference>
<dbReference type="InterPro" id="IPR029062">
    <property type="entry name" value="Class_I_gatase-like"/>
</dbReference>
<dbReference type="InterPro" id="IPR002586">
    <property type="entry name" value="CobQ/CobB/MinD/ParA_Nub-bd_dom"/>
</dbReference>
<dbReference type="InterPro" id="IPR011698">
    <property type="entry name" value="GATase_3"/>
</dbReference>
<dbReference type="InterPro" id="IPR027417">
    <property type="entry name" value="P-loop_NTPase"/>
</dbReference>
<dbReference type="NCBIfam" id="TIGR00379">
    <property type="entry name" value="cobB"/>
    <property type="match status" value="1"/>
</dbReference>
<dbReference type="NCBIfam" id="NF002204">
    <property type="entry name" value="PRK01077.1"/>
    <property type="match status" value="1"/>
</dbReference>
<dbReference type="PANTHER" id="PTHR43873">
    <property type="entry name" value="COBYRINATE A,C-DIAMIDE SYNTHASE"/>
    <property type="match status" value="1"/>
</dbReference>
<dbReference type="PANTHER" id="PTHR43873:SF1">
    <property type="entry name" value="COBYRINATE A,C-DIAMIDE SYNTHASE"/>
    <property type="match status" value="1"/>
</dbReference>
<dbReference type="Pfam" id="PF01656">
    <property type="entry name" value="CbiA"/>
    <property type="match status" value="1"/>
</dbReference>
<dbReference type="Pfam" id="PF07685">
    <property type="entry name" value="GATase_3"/>
    <property type="match status" value="1"/>
</dbReference>
<dbReference type="SUPFAM" id="SSF52317">
    <property type="entry name" value="Class I glutamine amidotransferase-like"/>
    <property type="match status" value="1"/>
</dbReference>
<dbReference type="SUPFAM" id="SSF52540">
    <property type="entry name" value="P-loop containing nucleoside triphosphate hydrolases"/>
    <property type="match status" value="1"/>
</dbReference>
<dbReference type="PROSITE" id="PS51274">
    <property type="entry name" value="GATASE_COBBQ"/>
    <property type="match status" value="1"/>
</dbReference>